<comment type="function">
    <text evidence="1">Catalyzes the initial step of the lipid cycle reactions in the biosynthesis of the cell wall peptidoglycan: transfers peptidoglycan precursor phospho-MurNAc-pentapeptide from UDP-MurNAc-pentapeptide onto the lipid carrier undecaprenyl phosphate, yielding undecaprenyl-pyrophosphoryl-MurNAc-pentapeptide, known as lipid I.</text>
</comment>
<comment type="catalytic activity">
    <reaction evidence="1">
        <text>UDP-N-acetyl-alpha-D-muramoyl-L-alanyl-gamma-D-glutamyl-meso-2,6-diaminopimeloyl-D-alanyl-D-alanine + di-trans,octa-cis-undecaprenyl phosphate = di-trans,octa-cis-undecaprenyl diphospho-N-acetyl-alpha-D-muramoyl-L-alanyl-D-glutamyl-meso-2,6-diaminopimeloyl-D-alanyl-D-alanine + UMP</text>
        <dbReference type="Rhea" id="RHEA:28386"/>
        <dbReference type="ChEBI" id="CHEBI:57865"/>
        <dbReference type="ChEBI" id="CHEBI:60392"/>
        <dbReference type="ChEBI" id="CHEBI:61386"/>
        <dbReference type="ChEBI" id="CHEBI:61387"/>
        <dbReference type="EC" id="2.7.8.13"/>
    </reaction>
</comment>
<comment type="cofactor">
    <cofactor evidence="1">
        <name>Mg(2+)</name>
        <dbReference type="ChEBI" id="CHEBI:18420"/>
    </cofactor>
</comment>
<comment type="pathway">
    <text evidence="1">Cell wall biogenesis; peptidoglycan biosynthesis.</text>
</comment>
<comment type="subcellular location">
    <subcellularLocation>
        <location evidence="1">Cell inner membrane</location>
        <topology evidence="1">Multi-pass membrane protein</topology>
    </subcellularLocation>
</comment>
<comment type="similarity">
    <text evidence="1">Belongs to the glycosyltransferase 4 family. MraY subfamily.</text>
</comment>
<proteinExistence type="inferred from homology"/>
<accession>A6T2G1</accession>
<reference key="1">
    <citation type="journal article" date="2007" name="PLoS Genet.">
        <title>Genome analysis of Minibacterium massiliensis highlights the convergent evolution of water-living bacteria.</title>
        <authorList>
            <person name="Audic S."/>
            <person name="Robert C."/>
            <person name="Campagna B."/>
            <person name="Parinello H."/>
            <person name="Claverie J.-M."/>
            <person name="Raoult D."/>
            <person name="Drancourt M."/>
        </authorList>
    </citation>
    <scope>NUCLEOTIDE SEQUENCE [LARGE SCALE GENOMIC DNA]</scope>
    <source>
        <strain>Marseille</strain>
    </source>
</reference>
<gene>
    <name evidence="1" type="primary">mraY</name>
    <name type="ordered locus">mma_3018</name>
</gene>
<organism>
    <name type="scientific">Janthinobacterium sp. (strain Marseille)</name>
    <name type="common">Minibacterium massiliensis</name>
    <dbReference type="NCBI Taxonomy" id="375286"/>
    <lineage>
        <taxon>Bacteria</taxon>
        <taxon>Pseudomonadati</taxon>
        <taxon>Pseudomonadota</taxon>
        <taxon>Betaproteobacteria</taxon>
        <taxon>Burkholderiales</taxon>
        <taxon>Oxalobacteraceae</taxon>
        <taxon>Janthinobacterium</taxon>
    </lineage>
</organism>
<feature type="chain" id="PRO_1000002992" description="Phospho-N-acetylmuramoyl-pentapeptide-transferase">
    <location>
        <begin position="1"/>
        <end position="389"/>
    </location>
</feature>
<feature type="transmembrane region" description="Helical" evidence="1">
    <location>
        <begin position="21"/>
        <end position="41"/>
    </location>
</feature>
<feature type="transmembrane region" description="Helical" evidence="1">
    <location>
        <begin position="70"/>
        <end position="90"/>
    </location>
</feature>
<feature type="transmembrane region" description="Helical" evidence="1">
    <location>
        <begin position="97"/>
        <end position="117"/>
    </location>
</feature>
<feature type="transmembrane region" description="Helical" evidence="1">
    <location>
        <begin position="134"/>
        <end position="154"/>
    </location>
</feature>
<feature type="transmembrane region" description="Helical" evidence="1">
    <location>
        <begin position="189"/>
        <end position="209"/>
    </location>
</feature>
<feature type="transmembrane region" description="Helical" evidence="1">
    <location>
        <begin position="222"/>
        <end position="242"/>
    </location>
</feature>
<feature type="transmembrane region" description="Helical" evidence="1">
    <location>
        <begin position="259"/>
        <end position="279"/>
    </location>
</feature>
<feature type="transmembrane region" description="Helical" evidence="1">
    <location>
        <begin position="286"/>
        <end position="306"/>
    </location>
</feature>
<feature type="transmembrane region" description="Helical" evidence="1">
    <location>
        <begin position="311"/>
        <end position="331"/>
    </location>
</feature>
<feature type="transmembrane region" description="Helical" evidence="1">
    <location>
        <begin position="366"/>
        <end position="386"/>
    </location>
</feature>
<protein>
    <recommendedName>
        <fullName evidence="1">Phospho-N-acetylmuramoyl-pentapeptide-transferase</fullName>
        <ecNumber evidence="1">2.7.8.13</ecNumber>
    </recommendedName>
    <alternativeName>
        <fullName evidence="1">UDP-MurNAc-pentapeptide phosphotransferase</fullName>
    </alternativeName>
</protein>
<evidence type="ECO:0000255" key="1">
    <source>
        <dbReference type="HAMAP-Rule" id="MF_00038"/>
    </source>
</evidence>
<keyword id="KW-0131">Cell cycle</keyword>
<keyword id="KW-0132">Cell division</keyword>
<keyword id="KW-0997">Cell inner membrane</keyword>
<keyword id="KW-1003">Cell membrane</keyword>
<keyword id="KW-0133">Cell shape</keyword>
<keyword id="KW-0961">Cell wall biogenesis/degradation</keyword>
<keyword id="KW-0460">Magnesium</keyword>
<keyword id="KW-0472">Membrane</keyword>
<keyword id="KW-0479">Metal-binding</keyword>
<keyword id="KW-0573">Peptidoglycan synthesis</keyword>
<keyword id="KW-0808">Transferase</keyword>
<keyword id="KW-0812">Transmembrane</keyword>
<keyword id="KW-1133">Transmembrane helix</keyword>
<dbReference type="EC" id="2.7.8.13" evidence="1"/>
<dbReference type="EMBL" id="CP000269">
    <property type="protein sequence ID" value="ABR88400.1"/>
    <property type="molecule type" value="Genomic_DNA"/>
</dbReference>
<dbReference type="RefSeq" id="WP_012080867.1">
    <property type="nucleotide sequence ID" value="NC_009659.1"/>
</dbReference>
<dbReference type="SMR" id="A6T2G1"/>
<dbReference type="STRING" id="375286.mma_3018"/>
<dbReference type="KEGG" id="mms:mma_3018"/>
<dbReference type="eggNOG" id="COG0472">
    <property type="taxonomic scope" value="Bacteria"/>
</dbReference>
<dbReference type="HOGENOM" id="CLU_023982_0_0_4"/>
<dbReference type="OrthoDB" id="9805475at2"/>
<dbReference type="UniPathway" id="UPA00219"/>
<dbReference type="Proteomes" id="UP000006388">
    <property type="component" value="Chromosome"/>
</dbReference>
<dbReference type="GO" id="GO:0005886">
    <property type="term" value="C:plasma membrane"/>
    <property type="evidence" value="ECO:0007669"/>
    <property type="project" value="UniProtKB-SubCell"/>
</dbReference>
<dbReference type="GO" id="GO:0046872">
    <property type="term" value="F:metal ion binding"/>
    <property type="evidence" value="ECO:0007669"/>
    <property type="project" value="UniProtKB-KW"/>
</dbReference>
<dbReference type="GO" id="GO:0008963">
    <property type="term" value="F:phospho-N-acetylmuramoyl-pentapeptide-transferase activity"/>
    <property type="evidence" value="ECO:0007669"/>
    <property type="project" value="UniProtKB-UniRule"/>
</dbReference>
<dbReference type="GO" id="GO:0051992">
    <property type="term" value="F:UDP-N-acetylmuramoyl-L-alanyl-D-glutamyl-meso-2,6-diaminopimelyl-D-alanyl-D-alanine:undecaprenyl-phosphate transferase activity"/>
    <property type="evidence" value="ECO:0007669"/>
    <property type="project" value="RHEA"/>
</dbReference>
<dbReference type="GO" id="GO:0051301">
    <property type="term" value="P:cell division"/>
    <property type="evidence" value="ECO:0007669"/>
    <property type="project" value="UniProtKB-KW"/>
</dbReference>
<dbReference type="GO" id="GO:0071555">
    <property type="term" value="P:cell wall organization"/>
    <property type="evidence" value="ECO:0007669"/>
    <property type="project" value="UniProtKB-KW"/>
</dbReference>
<dbReference type="GO" id="GO:0009252">
    <property type="term" value="P:peptidoglycan biosynthetic process"/>
    <property type="evidence" value="ECO:0007669"/>
    <property type="project" value="UniProtKB-UniRule"/>
</dbReference>
<dbReference type="GO" id="GO:0008360">
    <property type="term" value="P:regulation of cell shape"/>
    <property type="evidence" value="ECO:0007669"/>
    <property type="project" value="UniProtKB-KW"/>
</dbReference>
<dbReference type="CDD" id="cd06852">
    <property type="entry name" value="GT_MraY"/>
    <property type="match status" value="1"/>
</dbReference>
<dbReference type="HAMAP" id="MF_00038">
    <property type="entry name" value="MraY"/>
    <property type="match status" value="1"/>
</dbReference>
<dbReference type="InterPro" id="IPR000715">
    <property type="entry name" value="Glycosyl_transferase_4"/>
</dbReference>
<dbReference type="InterPro" id="IPR003524">
    <property type="entry name" value="PNAcMuramoyl-5peptid_Trfase"/>
</dbReference>
<dbReference type="InterPro" id="IPR018480">
    <property type="entry name" value="PNAcMuramoyl-5peptid_Trfase_CS"/>
</dbReference>
<dbReference type="NCBIfam" id="TIGR00445">
    <property type="entry name" value="mraY"/>
    <property type="match status" value="1"/>
</dbReference>
<dbReference type="PANTHER" id="PTHR22926">
    <property type="entry name" value="PHOSPHO-N-ACETYLMURAMOYL-PENTAPEPTIDE-TRANSFERASE"/>
    <property type="match status" value="1"/>
</dbReference>
<dbReference type="PANTHER" id="PTHR22926:SF5">
    <property type="entry name" value="PHOSPHO-N-ACETYLMURAMOYL-PENTAPEPTIDE-TRANSFERASE HOMOLOG"/>
    <property type="match status" value="1"/>
</dbReference>
<dbReference type="Pfam" id="PF00953">
    <property type="entry name" value="Glycos_transf_4"/>
    <property type="match status" value="1"/>
</dbReference>
<dbReference type="Pfam" id="PF10555">
    <property type="entry name" value="MraY_sig1"/>
    <property type="match status" value="1"/>
</dbReference>
<dbReference type="PROSITE" id="PS01347">
    <property type="entry name" value="MRAY_1"/>
    <property type="match status" value="1"/>
</dbReference>
<dbReference type="PROSITE" id="PS01348">
    <property type="entry name" value="MRAY_2"/>
    <property type="match status" value="1"/>
</dbReference>
<sequence length="389" mass="42701">MLLWLAQYFQDELGPLRVFNFITFRAVFATLTALVIGLVTGPAVIRMLTRLKVGQAVRTDGPQTHLIKSGTPTMGGVLILVSIGISTLLWTDLSNRFIWVVLIVTLGFGAVGWVDDYRKVVYKDPKGMASREKYMWQSIIGLFAAIYLAFSVSAPSNSQFLDLFIAWVQSGFSMDLPPKADLIVPFFKTISYPLGVWGFIALTYFVIVGTSNAVNLTDGLDGLAIMPTVMVGTALGLFAYLTGSANYSKYLFIPHIPGAGELIIFCGAMAGAGLAFLWFNAHPAQVFMGDVGALALGGALGTIAVIVRQEVVLFIMGGIFVVETLSVMLQVAYFKYTKMRTGIGKRILLMAPLHHHFEQKGWKETQVVVRFWIITMMLVLFGLSTLKLR</sequence>
<name>MRAY_JANMA</name>